<name>ARGB_METVS</name>
<reference key="1">
    <citation type="submission" date="2007-06" db="EMBL/GenBank/DDBJ databases">
        <title>Complete sequence of Methanococcus vannielii SB.</title>
        <authorList>
            <consortium name="US DOE Joint Genome Institute"/>
            <person name="Copeland A."/>
            <person name="Lucas S."/>
            <person name="Lapidus A."/>
            <person name="Barry K."/>
            <person name="Glavina del Rio T."/>
            <person name="Dalin E."/>
            <person name="Tice H."/>
            <person name="Pitluck S."/>
            <person name="Chain P."/>
            <person name="Malfatti S."/>
            <person name="Shin M."/>
            <person name="Vergez L."/>
            <person name="Schmutz J."/>
            <person name="Larimer F."/>
            <person name="Land M."/>
            <person name="Hauser L."/>
            <person name="Kyrpides N."/>
            <person name="Anderson I."/>
            <person name="Sieprawska-Lupa M."/>
            <person name="Whitman W.B."/>
            <person name="Richardson P."/>
        </authorList>
    </citation>
    <scope>NUCLEOTIDE SEQUENCE [LARGE SCALE GENOMIC DNA]</scope>
    <source>
        <strain>ATCC 35089 / DSM 1224 / JCM 13029 / OCM 148 / SB</strain>
    </source>
</reference>
<accession>A6UR56</accession>
<evidence type="ECO:0000255" key="1">
    <source>
        <dbReference type="HAMAP-Rule" id="MF_00082"/>
    </source>
</evidence>
<proteinExistence type="inferred from homology"/>
<sequence length="294" mass="32489">MDEYKKAEILIEALPYICKFHDQKFVIKYGGHAMVNEQAKNWIAKDMVLLKYVGINPIIVHGGGPEINRAMEKMGKVPEFIHGLRVTDEETLEIVKMVLIGKINGDIVSKLEQYGGKSVGLSGKSGQLIKARKKIQYLIRDNEKIEVDLGMVGEVERVDTKLVDILVEKKYIPVISPIGVDEQNKDLNLNADIAAGDIAGAMNAEKLIMVTDVDGIMDDINDPKTLHRKLTISQIEKMIEKGIITGGMIPKIEACINALNKGVQSVHIVNGKIPHAVLLEIFTEEGIGTMILKD</sequence>
<keyword id="KW-0028">Amino-acid biosynthesis</keyword>
<keyword id="KW-0055">Arginine biosynthesis</keyword>
<keyword id="KW-0067">ATP-binding</keyword>
<keyword id="KW-0963">Cytoplasm</keyword>
<keyword id="KW-0418">Kinase</keyword>
<keyword id="KW-0547">Nucleotide-binding</keyword>
<keyword id="KW-0808">Transferase</keyword>
<feature type="chain" id="PRO_1000010510" description="Acetylglutamate kinase">
    <location>
        <begin position="1"/>
        <end position="294"/>
    </location>
</feature>
<feature type="binding site" evidence="1">
    <location>
        <begin position="63"/>
        <end position="64"/>
    </location>
    <ligand>
        <name>substrate</name>
    </ligand>
</feature>
<feature type="binding site" evidence="1">
    <location>
        <position position="85"/>
    </location>
    <ligand>
        <name>substrate</name>
    </ligand>
</feature>
<feature type="binding site" evidence="1">
    <location>
        <position position="188"/>
    </location>
    <ligand>
        <name>substrate</name>
    </ligand>
</feature>
<feature type="site" description="Transition state stabilizer" evidence="1">
    <location>
        <position position="28"/>
    </location>
</feature>
<feature type="site" description="Transition state stabilizer" evidence="1">
    <location>
        <position position="251"/>
    </location>
</feature>
<organism>
    <name type="scientific">Methanococcus vannielii (strain ATCC 35089 / DSM 1224 / JCM 13029 / OCM 148 / SB)</name>
    <dbReference type="NCBI Taxonomy" id="406327"/>
    <lineage>
        <taxon>Archaea</taxon>
        <taxon>Methanobacteriati</taxon>
        <taxon>Methanobacteriota</taxon>
        <taxon>Methanomada group</taxon>
        <taxon>Methanococci</taxon>
        <taxon>Methanococcales</taxon>
        <taxon>Methanococcaceae</taxon>
        <taxon>Methanococcus</taxon>
    </lineage>
</organism>
<dbReference type="EC" id="2.7.2.8" evidence="1"/>
<dbReference type="EMBL" id="CP000742">
    <property type="protein sequence ID" value="ABR54978.1"/>
    <property type="molecule type" value="Genomic_DNA"/>
</dbReference>
<dbReference type="RefSeq" id="WP_012065893.1">
    <property type="nucleotide sequence ID" value="NC_009634.1"/>
</dbReference>
<dbReference type="SMR" id="A6UR56"/>
<dbReference type="STRING" id="406327.Mevan_1078"/>
<dbReference type="GeneID" id="5325321"/>
<dbReference type="KEGG" id="mvn:Mevan_1078"/>
<dbReference type="eggNOG" id="arCOG00862">
    <property type="taxonomic scope" value="Archaea"/>
</dbReference>
<dbReference type="HOGENOM" id="CLU_053680_0_0_2"/>
<dbReference type="OrthoDB" id="6816at2157"/>
<dbReference type="UniPathway" id="UPA00068">
    <property type="reaction ID" value="UER00107"/>
</dbReference>
<dbReference type="Proteomes" id="UP000001107">
    <property type="component" value="Chromosome"/>
</dbReference>
<dbReference type="GO" id="GO:0005737">
    <property type="term" value="C:cytoplasm"/>
    <property type="evidence" value="ECO:0007669"/>
    <property type="project" value="UniProtKB-SubCell"/>
</dbReference>
<dbReference type="GO" id="GO:0003991">
    <property type="term" value="F:acetylglutamate kinase activity"/>
    <property type="evidence" value="ECO:0007669"/>
    <property type="project" value="UniProtKB-UniRule"/>
</dbReference>
<dbReference type="GO" id="GO:0005524">
    <property type="term" value="F:ATP binding"/>
    <property type="evidence" value="ECO:0007669"/>
    <property type="project" value="UniProtKB-UniRule"/>
</dbReference>
<dbReference type="GO" id="GO:0042450">
    <property type="term" value="P:arginine biosynthetic process via ornithine"/>
    <property type="evidence" value="ECO:0007669"/>
    <property type="project" value="UniProtKB-UniRule"/>
</dbReference>
<dbReference type="GO" id="GO:0006526">
    <property type="term" value="P:L-arginine biosynthetic process"/>
    <property type="evidence" value="ECO:0007669"/>
    <property type="project" value="UniProtKB-UniPathway"/>
</dbReference>
<dbReference type="CDD" id="cd04250">
    <property type="entry name" value="AAK_NAGK-C"/>
    <property type="match status" value="1"/>
</dbReference>
<dbReference type="FunFam" id="3.40.1160.10:FF:000004">
    <property type="entry name" value="Acetylglutamate kinase"/>
    <property type="match status" value="1"/>
</dbReference>
<dbReference type="Gene3D" id="3.40.1160.10">
    <property type="entry name" value="Acetylglutamate kinase-like"/>
    <property type="match status" value="1"/>
</dbReference>
<dbReference type="HAMAP" id="MF_00082">
    <property type="entry name" value="ArgB"/>
    <property type="match status" value="1"/>
</dbReference>
<dbReference type="InterPro" id="IPR036393">
    <property type="entry name" value="AceGlu_kinase-like_sf"/>
</dbReference>
<dbReference type="InterPro" id="IPR004662">
    <property type="entry name" value="AcgluKinase_fam"/>
</dbReference>
<dbReference type="InterPro" id="IPR037528">
    <property type="entry name" value="ArgB"/>
</dbReference>
<dbReference type="InterPro" id="IPR001048">
    <property type="entry name" value="Asp/Glu/Uridylate_kinase"/>
</dbReference>
<dbReference type="InterPro" id="IPR001057">
    <property type="entry name" value="Glu/AcGlu_kinase"/>
</dbReference>
<dbReference type="InterPro" id="IPR041727">
    <property type="entry name" value="NAGK-C"/>
</dbReference>
<dbReference type="NCBIfam" id="TIGR00761">
    <property type="entry name" value="argB"/>
    <property type="match status" value="1"/>
</dbReference>
<dbReference type="PANTHER" id="PTHR23342">
    <property type="entry name" value="N-ACETYLGLUTAMATE SYNTHASE"/>
    <property type="match status" value="1"/>
</dbReference>
<dbReference type="PANTHER" id="PTHR23342:SF0">
    <property type="entry name" value="N-ACETYLGLUTAMATE SYNTHASE, MITOCHONDRIAL"/>
    <property type="match status" value="1"/>
</dbReference>
<dbReference type="Pfam" id="PF00696">
    <property type="entry name" value="AA_kinase"/>
    <property type="match status" value="1"/>
</dbReference>
<dbReference type="PIRSF" id="PIRSF000728">
    <property type="entry name" value="NAGK"/>
    <property type="match status" value="1"/>
</dbReference>
<dbReference type="PRINTS" id="PR00474">
    <property type="entry name" value="GLU5KINASE"/>
</dbReference>
<dbReference type="SUPFAM" id="SSF53633">
    <property type="entry name" value="Carbamate kinase-like"/>
    <property type="match status" value="1"/>
</dbReference>
<gene>
    <name evidence="1" type="primary">argB</name>
    <name type="ordered locus">Mevan_1078</name>
</gene>
<comment type="function">
    <text evidence="1">Catalyzes the ATP-dependent phosphorylation of N-acetyl-L-glutamate.</text>
</comment>
<comment type="catalytic activity">
    <reaction evidence="1">
        <text>N-acetyl-L-glutamate + ATP = N-acetyl-L-glutamyl 5-phosphate + ADP</text>
        <dbReference type="Rhea" id="RHEA:14629"/>
        <dbReference type="ChEBI" id="CHEBI:30616"/>
        <dbReference type="ChEBI" id="CHEBI:44337"/>
        <dbReference type="ChEBI" id="CHEBI:57936"/>
        <dbReference type="ChEBI" id="CHEBI:456216"/>
        <dbReference type="EC" id="2.7.2.8"/>
    </reaction>
</comment>
<comment type="pathway">
    <text evidence="1">Amino-acid biosynthesis; L-arginine biosynthesis; N(2)-acetyl-L-ornithine from L-glutamate: step 2/4.</text>
</comment>
<comment type="subcellular location">
    <subcellularLocation>
        <location evidence="1">Cytoplasm</location>
    </subcellularLocation>
</comment>
<comment type="similarity">
    <text evidence="1">Belongs to the acetylglutamate kinase family. ArgB subfamily.</text>
</comment>
<protein>
    <recommendedName>
        <fullName evidence="1">Acetylglutamate kinase</fullName>
        <ecNumber evidence="1">2.7.2.8</ecNumber>
    </recommendedName>
    <alternativeName>
        <fullName evidence="1">N-acetyl-L-glutamate 5-phosphotransferase</fullName>
    </alternativeName>
    <alternativeName>
        <fullName evidence="1">NAG kinase</fullName>
        <shortName evidence="1">NAGK</shortName>
    </alternativeName>
</protein>